<sequence>MNDCENFSPSPEFKWLCDELLGKIYETSSKKHLIGKPVTVRYLEIITNFIKLWRSTVGNYIYPALRLIVPFRDRRIYNVKENTLIKALCRYLRLPKSSETENRLLRWKQRAARGVKLSDFCVEEIRKRQKDYEGANRITIDELNGYLDEVSQEGNGKRMGYMALTDSRAFNYCLNHMTFMEMKFFFDIILKTRVLSGLENMFLTAWHPDATDYLSVVSDLDVLSQRLYNPNERLRQTDLSITISHAFEPQLAKRTHLSYERVASKLQHDFIIEEKMDGERLQIHYINYGEQIKYLSRRGVDFSYLYGENSSSGPISPSLKLHFNVKDCILDGEMITYDTEKDIVLPFGLVKSSAMNQIQSELAGIAPTESYKPLFVAFDLVYLNGKSLTNLALERRKDYLTKILTPVERSVEIIQYMKAINAEAIKDSLEQAISMGSEGIVLKHLHSKYFVGSRNTDWIKIKPEYLEQFGENMDLLIIGREQGKKDSFFCGLSISDPNEVAEKPRFISFCTIANGLSNEEFKDIERKTWGKWHIFSEDPPSPNLLGFGTKVPYEWIHPEDSVVLEVKARAIDTKESEKRKYRSGCTLHFGYCKQIRYDKDWKTVASFSEFEDMKDARNFYNKRKSHQVTDGKKRASKRAKIGIVNSSEPTALVAPVSNTFSNCRFRVISDYFDSTKRRRISQEDLCSVILEHGGEIVYTSDENNLPQDNLYIIGEKLTRECKILLNAKNLIIRPSWIFSCIEEGYKTPFTESDIFRGELESSMDCSQFYTDFNTASLNHLLETANRGIKNPDSDLLLPEVPLFLFSNLKLAVLNSENVLDTSILEVEFAIKCHGGELVHIENASIIIVFNDFISREDLFSLRQKIASKAVKESTESTPRIPRMVDISWALDSIKDNYIAETEHYQCL</sequence>
<accession>Q6CSH0</accession>
<keyword id="KW-0067">ATP-binding</keyword>
<keyword id="KW-0227">DNA damage</keyword>
<keyword id="KW-0233">DNA recombination</keyword>
<keyword id="KW-0234">DNA repair</keyword>
<keyword id="KW-0436">Ligase</keyword>
<keyword id="KW-0460">Magnesium</keyword>
<keyword id="KW-0479">Metal-binding</keyword>
<keyword id="KW-0547">Nucleotide-binding</keyword>
<keyword id="KW-0539">Nucleus</keyword>
<keyword id="KW-1185">Reference proteome</keyword>
<keyword id="KW-0677">Repeat</keyword>
<protein>
    <recommendedName>
        <fullName>DNA ligase 4</fullName>
        <ecNumber evidence="3">6.5.1.1</ecNumber>
    </recommendedName>
    <alternativeName>
        <fullName>DNA ligase IV</fullName>
    </alternativeName>
    <alternativeName>
        <fullName>Polydeoxyribonucleotide synthase [ATP] 4</fullName>
    </alternativeName>
</protein>
<evidence type="ECO:0000250" key="1"/>
<evidence type="ECO:0000250" key="2">
    <source>
        <dbReference type="UniProtKB" id="P49917"/>
    </source>
</evidence>
<evidence type="ECO:0000250" key="3">
    <source>
        <dbReference type="UniProtKB" id="Q08387"/>
    </source>
</evidence>
<evidence type="ECO:0000255" key="4"/>
<evidence type="ECO:0000255" key="5">
    <source>
        <dbReference type="PROSITE-ProRule" id="PRU00033"/>
    </source>
</evidence>
<evidence type="ECO:0000305" key="6"/>
<name>DNLI4_KLULA</name>
<reference key="1">
    <citation type="journal article" date="2004" name="Nature">
        <title>Genome evolution in yeasts.</title>
        <authorList>
            <person name="Dujon B."/>
            <person name="Sherman D."/>
            <person name="Fischer G."/>
            <person name="Durrens P."/>
            <person name="Casaregola S."/>
            <person name="Lafontaine I."/>
            <person name="de Montigny J."/>
            <person name="Marck C."/>
            <person name="Neuveglise C."/>
            <person name="Talla E."/>
            <person name="Goffard N."/>
            <person name="Frangeul L."/>
            <person name="Aigle M."/>
            <person name="Anthouard V."/>
            <person name="Babour A."/>
            <person name="Barbe V."/>
            <person name="Barnay S."/>
            <person name="Blanchin S."/>
            <person name="Beckerich J.-M."/>
            <person name="Beyne E."/>
            <person name="Bleykasten C."/>
            <person name="Boisrame A."/>
            <person name="Boyer J."/>
            <person name="Cattolico L."/>
            <person name="Confanioleri F."/>
            <person name="de Daruvar A."/>
            <person name="Despons L."/>
            <person name="Fabre E."/>
            <person name="Fairhead C."/>
            <person name="Ferry-Dumazet H."/>
            <person name="Groppi A."/>
            <person name="Hantraye F."/>
            <person name="Hennequin C."/>
            <person name="Jauniaux N."/>
            <person name="Joyet P."/>
            <person name="Kachouri R."/>
            <person name="Kerrest A."/>
            <person name="Koszul R."/>
            <person name="Lemaire M."/>
            <person name="Lesur I."/>
            <person name="Ma L."/>
            <person name="Muller H."/>
            <person name="Nicaud J.-M."/>
            <person name="Nikolski M."/>
            <person name="Oztas S."/>
            <person name="Ozier-Kalogeropoulos O."/>
            <person name="Pellenz S."/>
            <person name="Potier S."/>
            <person name="Richard G.-F."/>
            <person name="Straub M.-L."/>
            <person name="Suleau A."/>
            <person name="Swennen D."/>
            <person name="Tekaia F."/>
            <person name="Wesolowski-Louvel M."/>
            <person name="Westhof E."/>
            <person name="Wirth B."/>
            <person name="Zeniou-Meyer M."/>
            <person name="Zivanovic Y."/>
            <person name="Bolotin-Fukuhara M."/>
            <person name="Thierry A."/>
            <person name="Bouchier C."/>
            <person name="Caudron B."/>
            <person name="Scarpelli C."/>
            <person name="Gaillardin C."/>
            <person name="Weissenbach J."/>
            <person name="Wincker P."/>
            <person name="Souciet J.-L."/>
        </authorList>
    </citation>
    <scope>NUCLEOTIDE SEQUENCE [LARGE SCALE GENOMIC DNA]</scope>
    <source>
        <strain>ATCC 8585 / CBS 2359 / DSM 70799 / NBRC 1267 / NRRL Y-1140 / WM37</strain>
    </source>
</reference>
<comment type="function">
    <text evidence="3">DNA ligase involved in DNA non-homologous end joining (NHEJ); required for double-strand break (DSB) repair.</text>
</comment>
<comment type="catalytic activity">
    <reaction evidence="3">
        <text>ATP + (deoxyribonucleotide)n-3'-hydroxyl + 5'-phospho-(deoxyribonucleotide)m = (deoxyribonucleotide)n+m + AMP + diphosphate.</text>
        <dbReference type="EC" id="6.5.1.1"/>
    </reaction>
</comment>
<comment type="cofactor">
    <cofactor evidence="2">
        <name>Mg(2+)</name>
        <dbReference type="ChEBI" id="CHEBI:18420"/>
    </cofactor>
</comment>
<comment type="subcellular location">
    <subcellularLocation>
        <location evidence="3">Nucleus</location>
    </subcellularLocation>
</comment>
<comment type="similarity">
    <text evidence="6">Belongs to the ATP-dependent DNA ligase family.</text>
</comment>
<dbReference type="EC" id="6.5.1.1" evidence="3"/>
<dbReference type="EMBL" id="CR382124">
    <property type="protein sequence ID" value="CAH00215.1"/>
    <property type="molecule type" value="Genomic_DNA"/>
</dbReference>
<dbReference type="RefSeq" id="XP_453119.1">
    <property type="nucleotide sequence ID" value="XM_453119.1"/>
</dbReference>
<dbReference type="SMR" id="Q6CSH0"/>
<dbReference type="FunCoup" id="Q6CSH0">
    <property type="interactions" value="605"/>
</dbReference>
<dbReference type="STRING" id="284590.Q6CSH0"/>
<dbReference type="PaxDb" id="284590-Q6CSH0"/>
<dbReference type="KEGG" id="kla:KLLA0_D01089g"/>
<dbReference type="eggNOG" id="KOG0966">
    <property type="taxonomic scope" value="Eukaryota"/>
</dbReference>
<dbReference type="HOGENOM" id="CLU_004844_1_1_1"/>
<dbReference type="InParanoid" id="Q6CSH0"/>
<dbReference type="OMA" id="IMLQHRT"/>
<dbReference type="Proteomes" id="UP000000598">
    <property type="component" value="Chromosome D"/>
</dbReference>
<dbReference type="GO" id="GO:0032807">
    <property type="term" value="C:DNA ligase IV complex"/>
    <property type="evidence" value="ECO:0007669"/>
    <property type="project" value="TreeGrafter"/>
</dbReference>
<dbReference type="GO" id="GO:0005524">
    <property type="term" value="F:ATP binding"/>
    <property type="evidence" value="ECO:0007669"/>
    <property type="project" value="UniProtKB-KW"/>
</dbReference>
<dbReference type="GO" id="GO:0003677">
    <property type="term" value="F:DNA binding"/>
    <property type="evidence" value="ECO:0007669"/>
    <property type="project" value="InterPro"/>
</dbReference>
<dbReference type="GO" id="GO:0003910">
    <property type="term" value="F:DNA ligase (ATP) activity"/>
    <property type="evidence" value="ECO:0000250"/>
    <property type="project" value="UniProtKB"/>
</dbReference>
<dbReference type="GO" id="GO:0046872">
    <property type="term" value="F:metal ion binding"/>
    <property type="evidence" value="ECO:0007669"/>
    <property type="project" value="UniProtKB-KW"/>
</dbReference>
<dbReference type="GO" id="GO:0071897">
    <property type="term" value="P:DNA biosynthetic process"/>
    <property type="evidence" value="ECO:0007669"/>
    <property type="project" value="InterPro"/>
</dbReference>
<dbReference type="GO" id="GO:0006310">
    <property type="term" value="P:DNA recombination"/>
    <property type="evidence" value="ECO:0007669"/>
    <property type="project" value="UniProtKB-KW"/>
</dbReference>
<dbReference type="GO" id="GO:0097680">
    <property type="term" value="P:double-strand break repair via classical nonhomologous end joining"/>
    <property type="evidence" value="ECO:0000250"/>
    <property type="project" value="UniProtKB"/>
</dbReference>
<dbReference type="GO" id="GO:0006297">
    <property type="term" value="P:nucleotide-excision repair, DNA gap filling"/>
    <property type="evidence" value="ECO:0007669"/>
    <property type="project" value="TreeGrafter"/>
</dbReference>
<dbReference type="CDD" id="cd07903">
    <property type="entry name" value="Adenylation_DNA_ligase_IV"/>
    <property type="match status" value="1"/>
</dbReference>
<dbReference type="CDD" id="cd07968">
    <property type="entry name" value="OBF_DNA_ligase_IV"/>
    <property type="match status" value="1"/>
</dbReference>
<dbReference type="Gene3D" id="3.40.50.10190">
    <property type="entry name" value="BRCT domain"/>
    <property type="match status" value="1"/>
</dbReference>
<dbReference type="Gene3D" id="1.10.3260.10">
    <property type="entry name" value="DNA ligase, ATP-dependent, N-terminal domain"/>
    <property type="match status" value="1"/>
</dbReference>
<dbReference type="Gene3D" id="3.30.470.30">
    <property type="entry name" value="DNA ligase/mRNA capping enzyme"/>
    <property type="match status" value="1"/>
</dbReference>
<dbReference type="Gene3D" id="2.40.50.140">
    <property type="entry name" value="Nucleic acid-binding proteins"/>
    <property type="match status" value="1"/>
</dbReference>
<dbReference type="InterPro" id="IPR044125">
    <property type="entry name" value="Adenylation_DNA_ligase_IV"/>
</dbReference>
<dbReference type="InterPro" id="IPR001357">
    <property type="entry name" value="BRCT_dom"/>
</dbReference>
<dbReference type="InterPro" id="IPR036420">
    <property type="entry name" value="BRCT_dom_sf"/>
</dbReference>
<dbReference type="InterPro" id="IPR000977">
    <property type="entry name" value="DNA_ligase_ATP-dep"/>
</dbReference>
<dbReference type="InterPro" id="IPR012310">
    <property type="entry name" value="DNA_ligase_ATP-dep_cent"/>
</dbReference>
<dbReference type="InterPro" id="IPR012308">
    <property type="entry name" value="DNA_ligase_ATP-dep_N"/>
</dbReference>
<dbReference type="InterPro" id="IPR036599">
    <property type="entry name" value="DNA_ligase_N_sf"/>
</dbReference>
<dbReference type="InterPro" id="IPR029710">
    <property type="entry name" value="LIG4"/>
</dbReference>
<dbReference type="InterPro" id="IPR012340">
    <property type="entry name" value="NA-bd_OB-fold"/>
</dbReference>
<dbReference type="NCBIfam" id="TIGR00574">
    <property type="entry name" value="dnl1"/>
    <property type="match status" value="1"/>
</dbReference>
<dbReference type="PANTHER" id="PTHR45997">
    <property type="entry name" value="DNA LIGASE 4"/>
    <property type="match status" value="1"/>
</dbReference>
<dbReference type="PANTHER" id="PTHR45997:SF1">
    <property type="entry name" value="DNA LIGASE 4"/>
    <property type="match status" value="1"/>
</dbReference>
<dbReference type="Pfam" id="PF16589">
    <property type="entry name" value="BRCT_2"/>
    <property type="match status" value="1"/>
</dbReference>
<dbReference type="Pfam" id="PF01068">
    <property type="entry name" value="DNA_ligase_A_M"/>
    <property type="match status" value="1"/>
</dbReference>
<dbReference type="Pfam" id="PF04675">
    <property type="entry name" value="DNA_ligase_A_N"/>
    <property type="match status" value="1"/>
</dbReference>
<dbReference type="SMART" id="SM00292">
    <property type="entry name" value="BRCT"/>
    <property type="match status" value="1"/>
</dbReference>
<dbReference type="SUPFAM" id="SSF52113">
    <property type="entry name" value="BRCT domain"/>
    <property type="match status" value="1"/>
</dbReference>
<dbReference type="SUPFAM" id="SSF56091">
    <property type="entry name" value="DNA ligase/mRNA capping enzyme, catalytic domain"/>
    <property type="match status" value="1"/>
</dbReference>
<dbReference type="SUPFAM" id="SSF50249">
    <property type="entry name" value="Nucleic acid-binding proteins"/>
    <property type="match status" value="1"/>
</dbReference>
<dbReference type="PROSITE" id="PS50172">
    <property type="entry name" value="BRCT"/>
    <property type="match status" value="2"/>
</dbReference>
<dbReference type="PROSITE" id="PS50160">
    <property type="entry name" value="DNA_LIGASE_A3"/>
    <property type="match status" value="1"/>
</dbReference>
<gene>
    <name type="primary">LIG4</name>
    <name type="ordered locus">KLLA0D01089g</name>
</gene>
<organism>
    <name type="scientific">Kluyveromyces lactis (strain ATCC 8585 / CBS 2359 / DSM 70799 / NBRC 1267 / NRRL Y-1140 / WM37)</name>
    <name type="common">Yeast</name>
    <name type="synonym">Candida sphaerica</name>
    <dbReference type="NCBI Taxonomy" id="284590"/>
    <lineage>
        <taxon>Eukaryota</taxon>
        <taxon>Fungi</taxon>
        <taxon>Dikarya</taxon>
        <taxon>Ascomycota</taxon>
        <taxon>Saccharomycotina</taxon>
        <taxon>Saccharomycetes</taxon>
        <taxon>Saccharomycetales</taxon>
        <taxon>Saccharomycetaceae</taxon>
        <taxon>Kluyveromyces</taxon>
    </lineage>
</organism>
<feature type="chain" id="PRO_0000278383" description="DNA ligase 4">
    <location>
        <begin position="1"/>
        <end position="907"/>
    </location>
</feature>
<feature type="domain" description="BRCT 1" evidence="5">
    <location>
        <begin position="655"/>
        <end position="754"/>
    </location>
</feature>
<feature type="domain" description="BRCT 2" evidence="5">
    <location>
        <begin position="800"/>
        <end position="906"/>
    </location>
</feature>
<feature type="active site" description="N6-AMP-lysine intermediate" evidence="1">
    <location>
        <position position="275"/>
    </location>
</feature>
<feature type="binding site" evidence="2">
    <location>
        <position position="273"/>
    </location>
    <ligand>
        <name>ATP</name>
        <dbReference type="ChEBI" id="CHEBI:30616"/>
    </ligand>
</feature>
<feature type="binding site" evidence="2">
    <location>
        <position position="275"/>
    </location>
    <ligand>
        <name>ATP</name>
        <dbReference type="ChEBI" id="CHEBI:30616"/>
    </ligand>
</feature>
<feature type="binding site" evidence="2">
    <location>
        <position position="280"/>
    </location>
    <ligand>
        <name>ATP</name>
        <dbReference type="ChEBI" id="CHEBI:30616"/>
    </ligand>
</feature>
<feature type="binding site" evidence="2">
    <location>
        <position position="333"/>
    </location>
    <ligand>
        <name>ATP</name>
        <dbReference type="ChEBI" id="CHEBI:30616"/>
    </ligand>
</feature>
<feature type="binding site" evidence="4">
    <location>
        <position position="333"/>
    </location>
    <ligand>
        <name>Mg(2+)</name>
        <dbReference type="ChEBI" id="CHEBI:18420"/>
        <label>1</label>
    </ligand>
</feature>
<feature type="binding site" evidence="2">
    <location>
        <position position="378"/>
    </location>
    <ligand>
        <name>ATP</name>
        <dbReference type="ChEBI" id="CHEBI:30616"/>
    </ligand>
</feature>
<feature type="binding site" evidence="2">
    <location>
        <position position="438"/>
    </location>
    <ligand>
        <name>ATP</name>
        <dbReference type="ChEBI" id="CHEBI:30616"/>
    </ligand>
</feature>
<feature type="binding site" evidence="4">
    <location>
        <position position="438"/>
    </location>
    <ligand>
        <name>Mg(2+)</name>
        <dbReference type="ChEBI" id="CHEBI:18420"/>
        <label>2</label>
    </ligand>
</feature>
<feature type="binding site" evidence="2">
    <location>
        <position position="443"/>
    </location>
    <ligand>
        <name>ATP</name>
        <dbReference type="ChEBI" id="CHEBI:30616"/>
    </ligand>
</feature>
<feature type="binding site" evidence="2">
    <location>
        <position position="460"/>
    </location>
    <ligand>
        <name>ATP</name>
        <dbReference type="ChEBI" id="CHEBI:30616"/>
    </ligand>
</feature>
<feature type="binding site" evidence="2">
    <location>
        <position position="462"/>
    </location>
    <ligand>
        <name>ATP</name>
        <dbReference type="ChEBI" id="CHEBI:30616"/>
    </ligand>
</feature>
<proteinExistence type="inferred from homology"/>